<keyword id="KW-0028">Amino-acid biosynthesis</keyword>
<keyword id="KW-0032">Aminotransferase</keyword>
<keyword id="KW-0368">Histidine biosynthesis</keyword>
<keyword id="KW-0614">Plasmid</keyword>
<keyword id="KW-0663">Pyridoxal phosphate</keyword>
<keyword id="KW-1185">Reference proteome</keyword>
<keyword id="KW-0808">Transferase</keyword>
<dbReference type="EC" id="2.6.1.9"/>
<dbReference type="EMBL" id="U00090">
    <property type="protein sequence ID" value="AAB91912.1"/>
    <property type="molecule type" value="Genomic_DNA"/>
</dbReference>
<dbReference type="RefSeq" id="NP_444125.1">
    <property type="nucleotide sequence ID" value="NC_000914.2"/>
</dbReference>
<dbReference type="SMR" id="P55683"/>
<dbReference type="KEGG" id="rhi:NGR_a01000"/>
<dbReference type="PATRIC" id="fig|394.7.peg.86"/>
<dbReference type="eggNOG" id="COG0079">
    <property type="taxonomic scope" value="Bacteria"/>
</dbReference>
<dbReference type="HOGENOM" id="CLU_017584_3_0_5"/>
<dbReference type="OrthoDB" id="9809616at2"/>
<dbReference type="UniPathway" id="UPA00031">
    <property type="reaction ID" value="UER00012"/>
</dbReference>
<dbReference type="Proteomes" id="UP000001054">
    <property type="component" value="Plasmid pNGR234a"/>
</dbReference>
<dbReference type="GO" id="GO:0004400">
    <property type="term" value="F:histidinol-phosphate transaminase activity"/>
    <property type="evidence" value="ECO:0007669"/>
    <property type="project" value="UniProtKB-UniRule"/>
</dbReference>
<dbReference type="GO" id="GO:0030170">
    <property type="term" value="F:pyridoxal phosphate binding"/>
    <property type="evidence" value="ECO:0007669"/>
    <property type="project" value="InterPro"/>
</dbReference>
<dbReference type="GO" id="GO:0000105">
    <property type="term" value="P:L-histidine biosynthetic process"/>
    <property type="evidence" value="ECO:0007669"/>
    <property type="project" value="UniProtKB-UniRule"/>
</dbReference>
<dbReference type="CDD" id="cd00609">
    <property type="entry name" value="AAT_like"/>
    <property type="match status" value="1"/>
</dbReference>
<dbReference type="Gene3D" id="3.90.1150.10">
    <property type="entry name" value="Aspartate Aminotransferase, domain 1"/>
    <property type="match status" value="1"/>
</dbReference>
<dbReference type="Gene3D" id="3.40.640.10">
    <property type="entry name" value="Type I PLP-dependent aspartate aminotransferase-like (Major domain)"/>
    <property type="match status" value="1"/>
</dbReference>
<dbReference type="HAMAP" id="MF_01023">
    <property type="entry name" value="HisC_aminotrans_2"/>
    <property type="match status" value="1"/>
</dbReference>
<dbReference type="InterPro" id="IPR001917">
    <property type="entry name" value="Aminotrans_II_pyridoxalP_BS"/>
</dbReference>
<dbReference type="InterPro" id="IPR004839">
    <property type="entry name" value="Aminotransferase_I/II_large"/>
</dbReference>
<dbReference type="InterPro" id="IPR005861">
    <property type="entry name" value="HisP_aminotrans"/>
</dbReference>
<dbReference type="InterPro" id="IPR015424">
    <property type="entry name" value="PyrdxlP-dep_Trfase"/>
</dbReference>
<dbReference type="InterPro" id="IPR015421">
    <property type="entry name" value="PyrdxlP-dep_Trfase_major"/>
</dbReference>
<dbReference type="InterPro" id="IPR015422">
    <property type="entry name" value="PyrdxlP-dep_Trfase_small"/>
</dbReference>
<dbReference type="NCBIfam" id="TIGR01141">
    <property type="entry name" value="hisC"/>
    <property type="match status" value="1"/>
</dbReference>
<dbReference type="PANTHER" id="PTHR42885:SF2">
    <property type="entry name" value="HISTIDINOL-PHOSPHATE AMINOTRANSFERASE"/>
    <property type="match status" value="1"/>
</dbReference>
<dbReference type="PANTHER" id="PTHR42885">
    <property type="entry name" value="HISTIDINOL-PHOSPHATE AMINOTRANSFERASE-RELATED"/>
    <property type="match status" value="1"/>
</dbReference>
<dbReference type="Pfam" id="PF00155">
    <property type="entry name" value="Aminotran_1_2"/>
    <property type="match status" value="1"/>
</dbReference>
<dbReference type="SUPFAM" id="SSF53383">
    <property type="entry name" value="PLP-dependent transferases"/>
    <property type="match status" value="1"/>
</dbReference>
<dbReference type="PROSITE" id="PS00599">
    <property type="entry name" value="AA_TRANSFER_CLASS_2"/>
    <property type="match status" value="1"/>
</dbReference>
<organism>
    <name type="scientific">Sinorhizobium fredii (strain NBRC 101917 / NGR234)</name>
    <dbReference type="NCBI Taxonomy" id="394"/>
    <lineage>
        <taxon>Bacteria</taxon>
        <taxon>Pseudomonadati</taxon>
        <taxon>Pseudomonadota</taxon>
        <taxon>Alphaproteobacteria</taxon>
        <taxon>Hyphomicrobiales</taxon>
        <taxon>Rhizobiaceae</taxon>
        <taxon>Sinorhizobium/Ensifer group</taxon>
        <taxon>Sinorhizobium</taxon>
    </lineage>
</organism>
<geneLocation type="plasmid">
    <name>sym pNGR234a</name>
</geneLocation>
<sequence length="368" mass="40421">MERTMSDAKLQRVLSSLTEVYRQLNSLPSSQPSDAGYVKLDTNENPFALPKAVMQSAVAALERQYLYPEDDNISLREAAAASYDLSADQVIAGNGSSELLSLIYKAFLGPGDSVAMLSPGFAYNRKLAQLQGARLLEIKWGESSLLPIHELLFGPAKQAKFILLANPNNPTGTFVPIADIESLVALSDQLVVLDEAYVDFAPDSALRLVNRYSNLLLLRTFSKSYAAAGIRVGFGFGHPEVIGRLRNIQNMFNMNVIGHAVGVSILAHRATYNENHRHIRHERERVRVALSRLGFSVTPSHANFLLARVPAGRDGVWWHACLKRKKILVAVLPDEGLEDCIRVSIGTKPQMDAFLAAVEDISGAQQSR</sequence>
<reference key="1">
    <citation type="journal article" date="1997" name="Nature">
        <title>Molecular basis of symbiosis between Rhizobium and legumes.</title>
        <authorList>
            <person name="Freiberg C.A."/>
            <person name="Fellay R."/>
            <person name="Bairoch A."/>
            <person name="Broughton W.J."/>
            <person name="Rosenthal A."/>
            <person name="Perret X."/>
        </authorList>
    </citation>
    <scope>NUCLEOTIDE SEQUENCE [LARGE SCALE GENOMIC DNA]</scope>
    <source>
        <strain>NBRC 101917 / NGR234</strain>
    </source>
</reference>
<reference key="2">
    <citation type="journal article" date="2009" name="Appl. Environ. Microbiol.">
        <title>Rhizobium sp. strain NGR234 possesses a remarkable number of secretion systems.</title>
        <authorList>
            <person name="Schmeisser C."/>
            <person name="Liesegang H."/>
            <person name="Krysciak D."/>
            <person name="Bakkou N."/>
            <person name="Le Quere A."/>
            <person name="Wollherr A."/>
            <person name="Heinemeyer I."/>
            <person name="Morgenstern B."/>
            <person name="Pommerening-Roeser A."/>
            <person name="Flores M."/>
            <person name="Palacios R."/>
            <person name="Brenner S."/>
            <person name="Gottschalk G."/>
            <person name="Schmitz R.A."/>
            <person name="Broughton W.J."/>
            <person name="Perret X."/>
            <person name="Strittmatter A.W."/>
            <person name="Streit W.R."/>
        </authorList>
    </citation>
    <scope>NUCLEOTIDE SEQUENCE [LARGE SCALE GENOMIC DNA]</scope>
    <source>
        <strain>NBRC 101917 / NGR234</strain>
    </source>
</reference>
<comment type="catalytic activity">
    <reaction>
        <text>L-histidinol phosphate + 2-oxoglutarate = 3-(imidazol-4-yl)-2-oxopropyl phosphate + L-glutamate</text>
        <dbReference type="Rhea" id="RHEA:23744"/>
        <dbReference type="ChEBI" id="CHEBI:16810"/>
        <dbReference type="ChEBI" id="CHEBI:29985"/>
        <dbReference type="ChEBI" id="CHEBI:57766"/>
        <dbReference type="ChEBI" id="CHEBI:57980"/>
        <dbReference type="EC" id="2.6.1.9"/>
    </reaction>
</comment>
<comment type="cofactor">
    <cofactor evidence="1">
        <name>pyridoxal 5'-phosphate</name>
        <dbReference type="ChEBI" id="CHEBI:597326"/>
    </cofactor>
</comment>
<comment type="pathway">
    <text>Amino-acid biosynthesis; L-histidine biosynthesis; L-histidine from 5-phospho-alpha-D-ribose 1-diphosphate: step 7/9.</text>
</comment>
<comment type="subunit">
    <text evidence="1">Homodimer.</text>
</comment>
<comment type="similarity">
    <text evidence="2">Belongs to the class-II pyridoxal-phosphate-dependent aminotransferase family. Histidinol-phosphate aminotransferase subfamily.</text>
</comment>
<name>HIS8_SINFN</name>
<proteinExistence type="inferred from homology"/>
<gene>
    <name type="primary">hisC</name>
    <name type="ordered locus">NGR_a01000</name>
    <name type="ORF">y4wE</name>
</gene>
<evidence type="ECO:0000250" key="1"/>
<evidence type="ECO:0000305" key="2"/>
<protein>
    <recommendedName>
        <fullName>Histidinol-phosphate aminotransferase</fullName>
        <ecNumber>2.6.1.9</ecNumber>
    </recommendedName>
    <alternativeName>
        <fullName>Imidazole acetol-phosphate transaminase</fullName>
    </alternativeName>
</protein>
<feature type="chain" id="PRO_0000153438" description="Histidinol-phosphate aminotransferase">
    <location>
        <begin position="1"/>
        <end position="368"/>
    </location>
</feature>
<feature type="modified residue" description="N6-(pyridoxal phosphate)lysine" evidence="1">
    <location>
        <position position="223"/>
    </location>
</feature>
<accession>P55683</accession>